<comment type="function">
    <text evidence="1">Methyltransferase required for the conversion of demethylmenaquinol (DMKH2) to menaquinol (MKH2) and the conversion of 2-polyprenyl-6-methoxy-1,4-benzoquinol (DDMQH2) to 2-polyprenyl-3-methyl-6-methoxy-1,4-benzoquinol (DMQH2).</text>
</comment>
<comment type="catalytic activity">
    <reaction evidence="1">
        <text>a 2-demethylmenaquinol + S-adenosyl-L-methionine = a menaquinol + S-adenosyl-L-homocysteine + H(+)</text>
        <dbReference type="Rhea" id="RHEA:42640"/>
        <dbReference type="Rhea" id="RHEA-COMP:9539"/>
        <dbReference type="Rhea" id="RHEA-COMP:9563"/>
        <dbReference type="ChEBI" id="CHEBI:15378"/>
        <dbReference type="ChEBI" id="CHEBI:18151"/>
        <dbReference type="ChEBI" id="CHEBI:55437"/>
        <dbReference type="ChEBI" id="CHEBI:57856"/>
        <dbReference type="ChEBI" id="CHEBI:59789"/>
        <dbReference type="EC" id="2.1.1.163"/>
    </reaction>
</comment>
<comment type="catalytic activity">
    <reaction evidence="1">
        <text>a 2-methoxy-6-(all-trans-polyprenyl)benzene-1,4-diol + S-adenosyl-L-methionine = a 5-methoxy-2-methyl-3-(all-trans-polyprenyl)benzene-1,4-diol + S-adenosyl-L-homocysteine + H(+)</text>
        <dbReference type="Rhea" id="RHEA:28286"/>
        <dbReference type="Rhea" id="RHEA-COMP:10858"/>
        <dbReference type="Rhea" id="RHEA-COMP:10859"/>
        <dbReference type="ChEBI" id="CHEBI:15378"/>
        <dbReference type="ChEBI" id="CHEBI:57856"/>
        <dbReference type="ChEBI" id="CHEBI:59789"/>
        <dbReference type="ChEBI" id="CHEBI:84166"/>
        <dbReference type="ChEBI" id="CHEBI:84167"/>
        <dbReference type="EC" id="2.1.1.201"/>
    </reaction>
</comment>
<comment type="pathway">
    <text evidence="1">Quinol/quinone metabolism; menaquinone biosynthesis; menaquinol from 1,4-dihydroxy-2-naphthoate: step 2/2.</text>
</comment>
<comment type="pathway">
    <text evidence="1">Cofactor biosynthesis; ubiquinone biosynthesis.</text>
</comment>
<comment type="similarity">
    <text evidence="1">Belongs to the class I-like SAM-binding methyltransferase superfamily. MenG/UbiE family.</text>
</comment>
<name>UBIE_SALDC</name>
<sequence>MVEDSQETTHFGFQTVAKEQKADMVAHVFHSVASKYDVMNDLMSFGIHRLWKRFTIDCSGVRRGQTVLDLAGGTGDLTAKFSRMVGETGKVILADINDSMLKMGREKLRNIGVIGNVEYVQANAEALPFPDNTFDCITISFGLRNVTEKEKALRSMFRVLKPGGRLLVLEFSKPIIEPLSKAYDAYSFHILPRIGSMVANDADSYRYLAESIRMHPDQDTLKAMMQDAGFESVDYYNLTAGVVALHRGYKF</sequence>
<accession>B5FNW6</accession>
<dbReference type="EC" id="2.1.1.163" evidence="1"/>
<dbReference type="EC" id="2.1.1.201" evidence="1"/>
<dbReference type="EMBL" id="CP001144">
    <property type="protein sequence ID" value="ACH77650.1"/>
    <property type="molecule type" value="Genomic_DNA"/>
</dbReference>
<dbReference type="RefSeq" id="WP_000229009.1">
    <property type="nucleotide sequence ID" value="NC_011205.1"/>
</dbReference>
<dbReference type="SMR" id="B5FNW6"/>
<dbReference type="KEGG" id="sed:SeD_A4357"/>
<dbReference type="HOGENOM" id="CLU_037990_0_0_6"/>
<dbReference type="UniPathway" id="UPA00079">
    <property type="reaction ID" value="UER00169"/>
</dbReference>
<dbReference type="UniPathway" id="UPA00232"/>
<dbReference type="Proteomes" id="UP000008322">
    <property type="component" value="Chromosome"/>
</dbReference>
<dbReference type="GO" id="GO:0008425">
    <property type="term" value="F:2-methoxy-6-polyprenyl-1,4-benzoquinol methyltransferase activity"/>
    <property type="evidence" value="ECO:0007669"/>
    <property type="project" value="UniProtKB-UniRule"/>
</dbReference>
<dbReference type="GO" id="GO:0043770">
    <property type="term" value="F:demethylmenaquinone methyltransferase activity"/>
    <property type="evidence" value="ECO:0007669"/>
    <property type="project" value="UniProtKB-UniRule"/>
</dbReference>
<dbReference type="GO" id="GO:0009060">
    <property type="term" value="P:aerobic respiration"/>
    <property type="evidence" value="ECO:0007669"/>
    <property type="project" value="UniProtKB-UniRule"/>
</dbReference>
<dbReference type="GO" id="GO:0009234">
    <property type="term" value="P:menaquinone biosynthetic process"/>
    <property type="evidence" value="ECO:0007669"/>
    <property type="project" value="UniProtKB-UniRule"/>
</dbReference>
<dbReference type="GO" id="GO:0032259">
    <property type="term" value="P:methylation"/>
    <property type="evidence" value="ECO:0007669"/>
    <property type="project" value="UniProtKB-KW"/>
</dbReference>
<dbReference type="CDD" id="cd02440">
    <property type="entry name" value="AdoMet_MTases"/>
    <property type="match status" value="1"/>
</dbReference>
<dbReference type="FunFam" id="3.40.50.150:FF:000014">
    <property type="entry name" value="Ubiquinone/menaquinone biosynthesis C-methyltransferase UbiE"/>
    <property type="match status" value="1"/>
</dbReference>
<dbReference type="Gene3D" id="3.40.50.150">
    <property type="entry name" value="Vaccinia Virus protein VP39"/>
    <property type="match status" value="1"/>
</dbReference>
<dbReference type="HAMAP" id="MF_01813">
    <property type="entry name" value="MenG_UbiE_methyltr"/>
    <property type="match status" value="1"/>
</dbReference>
<dbReference type="InterPro" id="IPR029063">
    <property type="entry name" value="SAM-dependent_MTases_sf"/>
</dbReference>
<dbReference type="InterPro" id="IPR004033">
    <property type="entry name" value="UbiE/COQ5_MeTrFase"/>
</dbReference>
<dbReference type="InterPro" id="IPR023576">
    <property type="entry name" value="UbiE/COQ5_MeTrFase_CS"/>
</dbReference>
<dbReference type="NCBIfam" id="TIGR01934">
    <property type="entry name" value="MenG_MenH_UbiE"/>
    <property type="match status" value="1"/>
</dbReference>
<dbReference type="NCBIfam" id="NF001240">
    <property type="entry name" value="PRK00216.1-1"/>
    <property type="match status" value="1"/>
</dbReference>
<dbReference type="NCBIfam" id="NF001242">
    <property type="entry name" value="PRK00216.1-3"/>
    <property type="match status" value="1"/>
</dbReference>
<dbReference type="NCBIfam" id="NF001244">
    <property type="entry name" value="PRK00216.1-5"/>
    <property type="match status" value="1"/>
</dbReference>
<dbReference type="PANTHER" id="PTHR43591:SF24">
    <property type="entry name" value="2-METHOXY-6-POLYPRENYL-1,4-BENZOQUINOL METHYLASE, MITOCHONDRIAL"/>
    <property type="match status" value="1"/>
</dbReference>
<dbReference type="PANTHER" id="PTHR43591">
    <property type="entry name" value="METHYLTRANSFERASE"/>
    <property type="match status" value="1"/>
</dbReference>
<dbReference type="Pfam" id="PF01209">
    <property type="entry name" value="Ubie_methyltran"/>
    <property type="match status" value="1"/>
</dbReference>
<dbReference type="SUPFAM" id="SSF53335">
    <property type="entry name" value="S-adenosyl-L-methionine-dependent methyltransferases"/>
    <property type="match status" value="1"/>
</dbReference>
<dbReference type="PROSITE" id="PS51608">
    <property type="entry name" value="SAM_MT_UBIE"/>
    <property type="match status" value="1"/>
</dbReference>
<dbReference type="PROSITE" id="PS01183">
    <property type="entry name" value="UBIE_1"/>
    <property type="match status" value="1"/>
</dbReference>
<dbReference type="PROSITE" id="PS01184">
    <property type="entry name" value="UBIE_2"/>
    <property type="match status" value="1"/>
</dbReference>
<evidence type="ECO:0000255" key="1">
    <source>
        <dbReference type="HAMAP-Rule" id="MF_01813"/>
    </source>
</evidence>
<keyword id="KW-0474">Menaquinone biosynthesis</keyword>
<keyword id="KW-0489">Methyltransferase</keyword>
<keyword id="KW-0949">S-adenosyl-L-methionine</keyword>
<keyword id="KW-0808">Transferase</keyword>
<keyword id="KW-0831">Ubiquinone biosynthesis</keyword>
<protein>
    <recommendedName>
        <fullName evidence="1">Ubiquinone/menaquinone biosynthesis C-methyltransferase UbiE</fullName>
        <ecNumber evidence="1">2.1.1.163</ecNumber>
        <ecNumber evidence="1">2.1.1.201</ecNumber>
    </recommendedName>
    <alternativeName>
        <fullName evidence="1">2-methoxy-6-polyprenyl-1,4-benzoquinol methylase</fullName>
    </alternativeName>
    <alternativeName>
        <fullName evidence="1">Demethylmenaquinone methyltransferase</fullName>
    </alternativeName>
</protein>
<organism>
    <name type="scientific">Salmonella dublin (strain CT_02021853)</name>
    <dbReference type="NCBI Taxonomy" id="439851"/>
    <lineage>
        <taxon>Bacteria</taxon>
        <taxon>Pseudomonadati</taxon>
        <taxon>Pseudomonadota</taxon>
        <taxon>Gammaproteobacteria</taxon>
        <taxon>Enterobacterales</taxon>
        <taxon>Enterobacteriaceae</taxon>
        <taxon>Salmonella</taxon>
    </lineage>
</organism>
<gene>
    <name evidence="1" type="primary">ubiE</name>
    <name type="ordered locus">SeD_A4357</name>
</gene>
<reference key="1">
    <citation type="journal article" date="2011" name="J. Bacteriol.">
        <title>Comparative genomics of 28 Salmonella enterica isolates: evidence for CRISPR-mediated adaptive sublineage evolution.</title>
        <authorList>
            <person name="Fricke W.F."/>
            <person name="Mammel M.K."/>
            <person name="McDermott P.F."/>
            <person name="Tartera C."/>
            <person name="White D.G."/>
            <person name="Leclerc J.E."/>
            <person name="Ravel J."/>
            <person name="Cebula T.A."/>
        </authorList>
    </citation>
    <scope>NUCLEOTIDE SEQUENCE [LARGE SCALE GENOMIC DNA]</scope>
    <source>
        <strain>CT_02021853</strain>
    </source>
</reference>
<proteinExistence type="inferred from homology"/>
<feature type="chain" id="PRO_1000187803" description="Ubiquinone/menaquinone biosynthesis C-methyltransferase UbiE">
    <location>
        <begin position="1"/>
        <end position="251"/>
    </location>
</feature>
<feature type="binding site" evidence="1">
    <location>
        <position position="74"/>
    </location>
    <ligand>
        <name>S-adenosyl-L-methionine</name>
        <dbReference type="ChEBI" id="CHEBI:59789"/>
    </ligand>
</feature>
<feature type="binding site" evidence="1">
    <location>
        <position position="95"/>
    </location>
    <ligand>
        <name>S-adenosyl-L-methionine</name>
        <dbReference type="ChEBI" id="CHEBI:59789"/>
    </ligand>
</feature>
<feature type="binding site" evidence="1">
    <location>
        <begin position="123"/>
        <end position="124"/>
    </location>
    <ligand>
        <name>S-adenosyl-L-methionine</name>
        <dbReference type="ChEBI" id="CHEBI:59789"/>
    </ligand>
</feature>
<feature type="binding site" evidence="1">
    <location>
        <position position="140"/>
    </location>
    <ligand>
        <name>S-adenosyl-L-methionine</name>
        <dbReference type="ChEBI" id="CHEBI:59789"/>
    </ligand>
</feature>